<name>BIOW_BACSU</name>
<keyword id="KW-0002">3D-structure</keyword>
<keyword id="KW-0067">ATP-binding</keyword>
<keyword id="KW-0093">Biotin biosynthesis</keyword>
<keyword id="KW-0436">Ligase</keyword>
<keyword id="KW-0460">Magnesium</keyword>
<keyword id="KW-0547">Nucleotide-binding</keyword>
<keyword id="KW-1185">Reference proteome</keyword>
<protein>
    <recommendedName>
        <fullName>6-carboxyhexanoate--CoA ligase</fullName>
        <ecNumber>6.2.1.14</ecNumber>
    </recommendedName>
    <alternativeName>
        <fullName>Pimeloyl-CoA synthase</fullName>
    </alternativeName>
</protein>
<accession>P53559</accession>
<dbReference type="EC" id="6.2.1.14"/>
<dbReference type="EMBL" id="U51868">
    <property type="protein sequence ID" value="AAB17457.1"/>
    <property type="molecule type" value="Genomic_DNA"/>
</dbReference>
<dbReference type="EMBL" id="AF008220">
    <property type="protein sequence ID" value="AAC00261.1"/>
    <property type="status" value="ALT_INIT"/>
    <property type="molecule type" value="Genomic_DNA"/>
</dbReference>
<dbReference type="EMBL" id="AL009126">
    <property type="protein sequence ID" value="CAB15002.3"/>
    <property type="status" value="ALT_INIT"/>
    <property type="molecule type" value="Genomic_DNA"/>
</dbReference>
<dbReference type="PIR" id="H69594">
    <property type="entry name" value="H69594"/>
</dbReference>
<dbReference type="RefSeq" id="NP_390902.3">
    <property type="nucleotide sequence ID" value="NC_000964.3"/>
</dbReference>
<dbReference type="PDB" id="5FLG">
    <property type="method" value="X-ray"/>
    <property type="resolution" value="2.04 A"/>
    <property type="chains" value="A/B=4-259"/>
</dbReference>
<dbReference type="PDB" id="5FLL">
    <property type="method" value="X-ray"/>
    <property type="resolution" value="2.34 A"/>
    <property type="chains" value="A/B=4-259"/>
</dbReference>
<dbReference type="PDB" id="5FM0">
    <property type="method" value="X-ray"/>
    <property type="resolution" value="2.44 A"/>
    <property type="chains" value="A/B=4-259"/>
</dbReference>
<dbReference type="PDB" id="5G1F">
    <property type="method" value="X-ray"/>
    <property type="resolution" value="2.25 A"/>
    <property type="chains" value="A/B=4-259"/>
</dbReference>
<dbReference type="PDBsum" id="5FLG"/>
<dbReference type="PDBsum" id="5FLL"/>
<dbReference type="PDBsum" id="5FM0"/>
<dbReference type="PDBsum" id="5G1F"/>
<dbReference type="SMR" id="P53559"/>
<dbReference type="FunCoup" id="P53559">
    <property type="interactions" value="150"/>
</dbReference>
<dbReference type="STRING" id="224308.BSU30240"/>
<dbReference type="SwissLipids" id="SLP:000001730"/>
<dbReference type="PaxDb" id="224308-BSU30240"/>
<dbReference type="EnsemblBacteria" id="CAB15002">
    <property type="protein sequence ID" value="CAB15002"/>
    <property type="gene ID" value="BSU_30240"/>
</dbReference>
<dbReference type="GeneID" id="938017"/>
<dbReference type="KEGG" id="bsu:BSU30240"/>
<dbReference type="PATRIC" id="fig|224308.43.peg.3163"/>
<dbReference type="eggNOG" id="COG1424">
    <property type="taxonomic scope" value="Bacteria"/>
</dbReference>
<dbReference type="InParanoid" id="P53559"/>
<dbReference type="OrthoDB" id="9792985at2"/>
<dbReference type="BioCyc" id="BSUB:BSU30240-MONOMER"/>
<dbReference type="BioCyc" id="MetaCyc:BSU30240-MONOMER"/>
<dbReference type="BRENDA" id="6.2.1.14">
    <property type="organism ID" value="658"/>
</dbReference>
<dbReference type="UniPathway" id="UPA00999">
    <property type="reaction ID" value="UER00351"/>
</dbReference>
<dbReference type="Proteomes" id="UP000001570">
    <property type="component" value="Chromosome"/>
</dbReference>
<dbReference type="GO" id="GO:0042410">
    <property type="term" value="F:6-carboxyhexanoate-CoA ligase activity"/>
    <property type="evidence" value="ECO:0007669"/>
    <property type="project" value="UniProtKB-UniRule"/>
</dbReference>
<dbReference type="GO" id="GO:0005524">
    <property type="term" value="F:ATP binding"/>
    <property type="evidence" value="ECO:0007669"/>
    <property type="project" value="UniProtKB-KW"/>
</dbReference>
<dbReference type="GO" id="GO:0000287">
    <property type="term" value="F:magnesium ion binding"/>
    <property type="evidence" value="ECO:0007669"/>
    <property type="project" value="UniProtKB-UniRule"/>
</dbReference>
<dbReference type="GO" id="GO:0009102">
    <property type="term" value="P:biotin biosynthetic process"/>
    <property type="evidence" value="ECO:0007669"/>
    <property type="project" value="UniProtKB-UniRule"/>
</dbReference>
<dbReference type="HAMAP" id="MF_00668">
    <property type="entry name" value="BioW"/>
    <property type="match status" value="1"/>
</dbReference>
<dbReference type="InterPro" id="IPR005499">
    <property type="entry name" value="BioW"/>
</dbReference>
<dbReference type="NCBIfam" id="TIGR01204">
    <property type="entry name" value="bioW"/>
    <property type="match status" value="1"/>
</dbReference>
<dbReference type="NCBIfam" id="NF002360">
    <property type="entry name" value="PRK01322.1"/>
    <property type="match status" value="1"/>
</dbReference>
<dbReference type="Pfam" id="PF03744">
    <property type="entry name" value="BioW"/>
    <property type="match status" value="1"/>
</dbReference>
<gene>
    <name type="primary">bioW</name>
    <name type="ordered locus">BSU30240</name>
</gene>
<sequence length="259" mass="29630">MMQEETFYSVRMRASMNGSHEDGGKHISGGERLIPFHEMKHTVNALLEKGLSHSRGKPDFMQIQFEEVHESIKTIQPLPVHTNEVSCPEEGQKLARLLLEKEGVSRDVIEKAYEQIPEWSDVRGAVLFDIHTGKRMDQTKEKGVRVSRMDWPDANFEKWALHSHVPAHSRIKEALALASKVSRHPAVVAELCWSDDPDYITGYVAGKKMGYQRITAMKEYGTEEGCRVFFIDGSNDVNTYIHDLEKQPILIEWEEDHDS</sequence>
<comment type="function">
    <text evidence="1">Catalyzes the transformation of pimelate into pimeloyl-CoA with concomitant hydrolysis of ATP to AMP.</text>
</comment>
<comment type="catalytic activity">
    <reaction>
        <text>heptanedioate + ATP + CoA = 6-carboxyhexanoyl-CoA + AMP + diphosphate</text>
        <dbReference type="Rhea" id="RHEA:14781"/>
        <dbReference type="ChEBI" id="CHEBI:30616"/>
        <dbReference type="ChEBI" id="CHEBI:33019"/>
        <dbReference type="ChEBI" id="CHEBI:36165"/>
        <dbReference type="ChEBI" id="CHEBI:57287"/>
        <dbReference type="ChEBI" id="CHEBI:57360"/>
        <dbReference type="ChEBI" id="CHEBI:456215"/>
        <dbReference type="EC" id="6.2.1.14"/>
    </reaction>
</comment>
<comment type="cofactor">
    <cofactor evidence="1">
        <name>Mg(2+)</name>
        <dbReference type="ChEBI" id="CHEBI:18420"/>
    </cofactor>
</comment>
<comment type="pathway">
    <text>Metabolic intermediate metabolism; pimeloyl-CoA biosynthesis; pimeloyl-CoA from pimelate: step 1/1.</text>
</comment>
<comment type="subunit">
    <text evidence="1">Homodimer.</text>
</comment>
<comment type="similarity">
    <text evidence="2">Belongs to the BioW family.</text>
</comment>
<comment type="sequence caution" evidence="2">
    <conflict type="erroneous initiation">
        <sequence resource="EMBL-CDS" id="AAC00261"/>
    </conflict>
    <text>Truncated N-terminus.</text>
</comment>
<comment type="sequence caution" evidence="2">
    <conflict type="erroneous initiation">
        <sequence resource="EMBL-CDS" id="CAB15002"/>
    </conflict>
    <text>Truncated N-terminus.</text>
</comment>
<organism>
    <name type="scientific">Bacillus subtilis (strain 168)</name>
    <dbReference type="NCBI Taxonomy" id="224308"/>
    <lineage>
        <taxon>Bacteria</taxon>
        <taxon>Bacillati</taxon>
        <taxon>Bacillota</taxon>
        <taxon>Bacilli</taxon>
        <taxon>Bacillales</taxon>
        <taxon>Bacillaceae</taxon>
        <taxon>Bacillus</taxon>
    </lineage>
</organism>
<feature type="chain" id="PRO_0000191016" description="6-carboxyhexanoate--CoA ligase">
    <location>
        <begin position="1"/>
        <end position="259"/>
    </location>
</feature>
<feature type="strand" evidence="3">
    <location>
        <begin position="7"/>
        <end position="17"/>
    </location>
</feature>
<feature type="strand" evidence="3">
    <location>
        <begin position="25"/>
        <end position="35"/>
    </location>
</feature>
<feature type="helix" evidence="3">
    <location>
        <begin position="36"/>
        <end position="38"/>
    </location>
</feature>
<feature type="helix" evidence="3">
    <location>
        <begin position="39"/>
        <end position="51"/>
    </location>
</feature>
<feature type="strand" evidence="3">
    <location>
        <begin position="59"/>
        <end position="67"/>
    </location>
</feature>
<feature type="strand" evidence="3">
    <location>
        <begin position="73"/>
        <end position="75"/>
    </location>
</feature>
<feature type="strand" evidence="3">
    <location>
        <begin position="80"/>
        <end position="83"/>
    </location>
</feature>
<feature type="helix" evidence="3">
    <location>
        <begin position="88"/>
        <end position="101"/>
    </location>
</feature>
<feature type="helix" evidence="3">
    <location>
        <begin position="106"/>
        <end position="115"/>
    </location>
</feature>
<feature type="helix" evidence="3">
    <location>
        <begin position="116"/>
        <end position="119"/>
    </location>
</feature>
<feature type="strand" evidence="3">
    <location>
        <begin position="123"/>
        <end position="129"/>
    </location>
</feature>
<feature type="turn" evidence="3">
    <location>
        <begin position="130"/>
        <end position="133"/>
    </location>
</feature>
<feature type="turn" evidence="3">
    <location>
        <begin position="140"/>
        <end position="142"/>
    </location>
</feature>
<feature type="strand" evidence="3">
    <location>
        <begin position="148"/>
        <end position="150"/>
    </location>
</feature>
<feature type="helix" evidence="3">
    <location>
        <begin position="153"/>
        <end position="163"/>
    </location>
</feature>
<feature type="helix" evidence="3">
    <location>
        <begin position="169"/>
        <end position="183"/>
    </location>
</feature>
<feature type="strand" evidence="3">
    <location>
        <begin position="187"/>
        <end position="193"/>
    </location>
</feature>
<feature type="strand" evidence="3">
    <location>
        <begin position="202"/>
        <end position="206"/>
    </location>
</feature>
<feature type="turn" evidence="3">
    <location>
        <begin position="207"/>
        <end position="209"/>
    </location>
</feature>
<feature type="strand" evidence="3">
    <location>
        <begin position="210"/>
        <end position="215"/>
    </location>
</feature>
<feature type="strand" evidence="3">
    <location>
        <begin position="226"/>
        <end position="231"/>
    </location>
</feature>
<feature type="helix" evidence="3">
    <location>
        <begin position="237"/>
        <end position="246"/>
    </location>
</feature>
<feature type="strand" evidence="3">
    <location>
        <begin position="249"/>
        <end position="251"/>
    </location>
</feature>
<reference key="1">
    <citation type="journal article" date="1996" name="J. Bacteriol.">
        <title>Cloning, sequencing, and characterization of the Bacillus subtilis biotin biosynthetic operon.</title>
        <authorList>
            <person name="Bower S."/>
            <person name="Perkins J.B."/>
            <person name="Yocum R.R."/>
            <person name="Howitt C.L."/>
            <person name="Rahaim P."/>
            <person name="Pero J."/>
        </authorList>
    </citation>
    <scope>NUCLEOTIDE SEQUENCE [GENOMIC DNA]</scope>
</reference>
<reference key="2">
    <citation type="journal article" date="1997" name="Microbiology">
        <title>Sequencing and functional annotation of the Bacillus subtilis genes in the 200 kb rrnB-dnaB region.</title>
        <authorList>
            <person name="Lapidus A."/>
            <person name="Galleron N."/>
            <person name="Sorokin A."/>
            <person name="Ehrlich S.D."/>
        </authorList>
    </citation>
    <scope>NUCLEOTIDE SEQUENCE [GENOMIC DNA]</scope>
    <source>
        <strain>168</strain>
    </source>
</reference>
<reference key="3">
    <citation type="journal article" date="1997" name="Nature">
        <title>The complete genome sequence of the Gram-positive bacterium Bacillus subtilis.</title>
        <authorList>
            <person name="Kunst F."/>
            <person name="Ogasawara N."/>
            <person name="Moszer I."/>
            <person name="Albertini A.M."/>
            <person name="Alloni G."/>
            <person name="Azevedo V."/>
            <person name="Bertero M.G."/>
            <person name="Bessieres P."/>
            <person name="Bolotin A."/>
            <person name="Borchert S."/>
            <person name="Borriss R."/>
            <person name="Boursier L."/>
            <person name="Brans A."/>
            <person name="Braun M."/>
            <person name="Brignell S.C."/>
            <person name="Bron S."/>
            <person name="Brouillet S."/>
            <person name="Bruschi C.V."/>
            <person name="Caldwell B."/>
            <person name="Capuano V."/>
            <person name="Carter N.M."/>
            <person name="Choi S.-K."/>
            <person name="Codani J.-J."/>
            <person name="Connerton I.F."/>
            <person name="Cummings N.J."/>
            <person name="Daniel R.A."/>
            <person name="Denizot F."/>
            <person name="Devine K.M."/>
            <person name="Duesterhoeft A."/>
            <person name="Ehrlich S.D."/>
            <person name="Emmerson P.T."/>
            <person name="Entian K.-D."/>
            <person name="Errington J."/>
            <person name="Fabret C."/>
            <person name="Ferrari E."/>
            <person name="Foulger D."/>
            <person name="Fritz C."/>
            <person name="Fujita M."/>
            <person name="Fujita Y."/>
            <person name="Fuma S."/>
            <person name="Galizzi A."/>
            <person name="Galleron N."/>
            <person name="Ghim S.-Y."/>
            <person name="Glaser P."/>
            <person name="Goffeau A."/>
            <person name="Golightly E.J."/>
            <person name="Grandi G."/>
            <person name="Guiseppi G."/>
            <person name="Guy B.J."/>
            <person name="Haga K."/>
            <person name="Haiech J."/>
            <person name="Harwood C.R."/>
            <person name="Henaut A."/>
            <person name="Hilbert H."/>
            <person name="Holsappel S."/>
            <person name="Hosono S."/>
            <person name="Hullo M.-F."/>
            <person name="Itaya M."/>
            <person name="Jones L.-M."/>
            <person name="Joris B."/>
            <person name="Karamata D."/>
            <person name="Kasahara Y."/>
            <person name="Klaerr-Blanchard M."/>
            <person name="Klein C."/>
            <person name="Kobayashi Y."/>
            <person name="Koetter P."/>
            <person name="Koningstein G."/>
            <person name="Krogh S."/>
            <person name="Kumano M."/>
            <person name="Kurita K."/>
            <person name="Lapidus A."/>
            <person name="Lardinois S."/>
            <person name="Lauber J."/>
            <person name="Lazarevic V."/>
            <person name="Lee S.-M."/>
            <person name="Levine A."/>
            <person name="Liu H."/>
            <person name="Masuda S."/>
            <person name="Mauel C."/>
            <person name="Medigue C."/>
            <person name="Medina N."/>
            <person name="Mellado R.P."/>
            <person name="Mizuno M."/>
            <person name="Moestl D."/>
            <person name="Nakai S."/>
            <person name="Noback M."/>
            <person name="Noone D."/>
            <person name="O'Reilly M."/>
            <person name="Ogawa K."/>
            <person name="Ogiwara A."/>
            <person name="Oudega B."/>
            <person name="Park S.-H."/>
            <person name="Parro V."/>
            <person name="Pohl T.M."/>
            <person name="Portetelle D."/>
            <person name="Porwollik S."/>
            <person name="Prescott A.M."/>
            <person name="Presecan E."/>
            <person name="Pujic P."/>
            <person name="Purnelle B."/>
            <person name="Rapoport G."/>
            <person name="Rey M."/>
            <person name="Reynolds S."/>
            <person name="Rieger M."/>
            <person name="Rivolta C."/>
            <person name="Rocha E."/>
            <person name="Roche B."/>
            <person name="Rose M."/>
            <person name="Sadaie Y."/>
            <person name="Sato T."/>
            <person name="Scanlan E."/>
            <person name="Schleich S."/>
            <person name="Schroeter R."/>
            <person name="Scoffone F."/>
            <person name="Sekiguchi J."/>
            <person name="Sekowska A."/>
            <person name="Seror S.J."/>
            <person name="Serror P."/>
            <person name="Shin B.-S."/>
            <person name="Soldo B."/>
            <person name="Sorokin A."/>
            <person name="Tacconi E."/>
            <person name="Takagi T."/>
            <person name="Takahashi H."/>
            <person name="Takemaru K."/>
            <person name="Takeuchi M."/>
            <person name="Tamakoshi A."/>
            <person name="Tanaka T."/>
            <person name="Terpstra P."/>
            <person name="Tognoni A."/>
            <person name="Tosato V."/>
            <person name="Uchiyama S."/>
            <person name="Vandenbol M."/>
            <person name="Vannier F."/>
            <person name="Vassarotti A."/>
            <person name="Viari A."/>
            <person name="Wambutt R."/>
            <person name="Wedler E."/>
            <person name="Wedler H."/>
            <person name="Weitzenegger T."/>
            <person name="Winters P."/>
            <person name="Wipat A."/>
            <person name="Yamamoto H."/>
            <person name="Yamane K."/>
            <person name="Yasumoto K."/>
            <person name="Yata K."/>
            <person name="Yoshida K."/>
            <person name="Yoshikawa H.-F."/>
            <person name="Zumstein E."/>
            <person name="Yoshikawa H."/>
            <person name="Danchin A."/>
        </authorList>
    </citation>
    <scope>NUCLEOTIDE SEQUENCE [LARGE SCALE GENOMIC DNA]</scope>
    <source>
        <strain>168</strain>
    </source>
</reference>
<evidence type="ECO:0000250" key="1"/>
<evidence type="ECO:0000305" key="2"/>
<evidence type="ECO:0007829" key="3">
    <source>
        <dbReference type="PDB" id="5FLG"/>
    </source>
</evidence>
<proteinExistence type="evidence at protein level"/>